<comment type="function">
    <text evidence="3">Contributes to the transparency and refractive index of the lens. Acts as a chaperone, preventing aggregation of various proteins under a wide range of stress conditions. Required for the correct formation of lens intermediate filaments as part of a complex composed of BFSP1, BFSP2 and CRYAA.</text>
</comment>
<comment type="subunit">
    <text evidence="2 3">Heteromer composed of three CRYAA and one CRYAB subunits. Inter-subunit bridging via zinc ions enhances stability, which is crucial as there is no protein turn over in the lens. Can also form homodimers and homotetramers (dimers of dimers) which serve as the building blocks of homooligomers (By similarity). Within homooligomers, the zinc-binding motif is created from residues of 3 different molecules. His-100 and Glu-102 from one molecule are ligands of the zinc ion, and His-107 and His-154 residues from additional molecules complete the site with tetrahedral coordination geometry (By similarity). Part of a complex required for lens intermediate filament formation composed of BFSP1, BFSP2 and CRYAA (By similarity).</text>
</comment>
<comment type="subcellular location">
    <subcellularLocation>
        <location evidence="3">Cytoplasm</location>
    </subcellularLocation>
    <subcellularLocation>
        <location evidence="3">Nucleus</location>
    </subcellularLocation>
    <text evidence="3">Translocates to the nucleus during heat shock and resides in sub-nuclear structures known as SC35 speckles or nuclear splicing speckles.</text>
</comment>
<comment type="PTM">
    <text evidence="3">Acetylation at Lys-70 may increase chaperone activity.</text>
</comment>
<comment type="PTM">
    <text evidence="3">Undergoes age-dependent proteolytical cleavage at the C-terminus.</text>
</comment>
<comment type="similarity">
    <text evidence="4">Belongs to the small heat shock protein (HSP20) family.</text>
</comment>
<evidence type="ECO:0000250" key="1"/>
<evidence type="ECO:0000250" key="2">
    <source>
        <dbReference type="UniProtKB" id="P02470"/>
    </source>
</evidence>
<evidence type="ECO:0000250" key="3">
    <source>
        <dbReference type="UniProtKB" id="P02489"/>
    </source>
</evidence>
<evidence type="ECO:0000255" key="4">
    <source>
        <dbReference type="PROSITE-ProRule" id="PRU00285"/>
    </source>
</evidence>
<evidence type="ECO:0000256" key="5">
    <source>
        <dbReference type="SAM" id="MobiDB-lite"/>
    </source>
</evidence>
<evidence type="ECO:0000269" key="6">
    <source>
    </source>
</evidence>
<name>CRYAA_BALAC</name>
<dbReference type="PIR" id="A02876">
    <property type="entry name" value="CYWHAA"/>
</dbReference>
<dbReference type="RefSeq" id="XP_007172735.1">
    <property type="nucleotide sequence ID" value="XM_007172673.2"/>
</dbReference>
<dbReference type="BMRB" id="P02474"/>
<dbReference type="SMR" id="P02474"/>
<dbReference type="GlyCosmos" id="P02474">
    <property type="glycosylation" value="1 site, No reported glycans"/>
</dbReference>
<dbReference type="iPTMnet" id="P02474"/>
<dbReference type="GeneID" id="103017790"/>
<dbReference type="GO" id="GO:0005737">
    <property type="term" value="C:cytoplasm"/>
    <property type="evidence" value="ECO:0000250"/>
    <property type="project" value="UniProtKB"/>
</dbReference>
<dbReference type="GO" id="GO:0005634">
    <property type="term" value="C:nucleus"/>
    <property type="evidence" value="ECO:0000250"/>
    <property type="project" value="UniProtKB"/>
</dbReference>
<dbReference type="GO" id="GO:0046872">
    <property type="term" value="F:metal ion binding"/>
    <property type="evidence" value="ECO:0007669"/>
    <property type="project" value="UniProtKB-KW"/>
</dbReference>
<dbReference type="GO" id="GO:0005212">
    <property type="term" value="F:structural constituent of eye lens"/>
    <property type="evidence" value="ECO:0007669"/>
    <property type="project" value="UniProtKB-KW"/>
</dbReference>
<dbReference type="GO" id="GO:0051082">
    <property type="term" value="F:unfolded protein binding"/>
    <property type="evidence" value="ECO:0007669"/>
    <property type="project" value="TreeGrafter"/>
</dbReference>
<dbReference type="GO" id="GO:0002088">
    <property type="term" value="P:lens development in camera-type eye"/>
    <property type="evidence" value="ECO:0007669"/>
    <property type="project" value="TreeGrafter"/>
</dbReference>
<dbReference type="GO" id="GO:0043066">
    <property type="term" value="P:negative regulation of apoptotic process"/>
    <property type="evidence" value="ECO:0007669"/>
    <property type="project" value="TreeGrafter"/>
</dbReference>
<dbReference type="GO" id="GO:0042026">
    <property type="term" value="P:protein refolding"/>
    <property type="evidence" value="ECO:0007669"/>
    <property type="project" value="TreeGrafter"/>
</dbReference>
<dbReference type="GO" id="GO:0009408">
    <property type="term" value="P:response to heat"/>
    <property type="evidence" value="ECO:0007669"/>
    <property type="project" value="TreeGrafter"/>
</dbReference>
<dbReference type="FunFam" id="2.60.40.790:FF:000008">
    <property type="entry name" value="Alpha-crystallin A chain"/>
    <property type="match status" value="1"/>
</dbReference>
<dbReference type="Gene3D" id="2.60.40.790">
    <property type="match status" value="1"/>
</dbReference>
<dbReference type="InterPro" id="IPR002068">
    <property type="entry name" value="A-crystallin/Hsp20_dom"/>
</dbReference>
<dbReference type="InterPro" id="IPR055269">
    <property type="entry name" value="Alpha-crystallin/HSP_16"/>
</dbReference>
<dbReference type="InterPro" id="IPR001436">
    <property type="entry name" value="Alpha-crystallin/sHSP_animal"/>
</dbReference>
<dbReference type="InterPro" id="IPR003090">
    <property type="entry name" value="Alpha-crystallin_N"/>
</dbReference>
<dbReference type="InterPro" id="IPR008978">
    <property type="entry name" value="HSP20-like_chaperone"/>
</dbReference>
<dbReference type="PANTHER" id="PTHR45640:SF14">
    <property type="entry name" value="ALPHA-CRYSTALLIN A CHAIN"/>
    <property type="match status" value="1"/>
</dbReference>
<dbReference type="PANTHER" id="PTHR45640">
    <property type="entry name" value="HEAT SHOCK PROTEIN HSP-12.2-RELATED"/>
    <property type="match status" value="1"/>
</dbReference>
<dbReference type="Pfam" id="PF00525">
    <property type="entry name" value="Crystallin"/>
    <property type="match status" value="1"/>
</dbReference>
<dbReference type="Pfam" id="PF00011">
    <property type="entry name" value="HSP20"/>
    <property type="match status" value="1"/>
</dbReference>
<dbReference type="PIRSF" id="PIRSF036514">
    <property type="entry name" value="Sm_HSP_B1"/>
    <property type="match status" value="1"/>
</dbReference>
<dbReference type="PRINTS" id="PR00299">
    <property type="entry name" value="ACRYSTALLIN"/>
</dbReference>
<dbReference type="SUPFAM" id="SSF49764">
    <property type="entry name" value="HSP20-like chaperones"/>
    <property type="match status" value="1"/>
</dbReference>
<dbReference type="PROSITE" id="PS01031">
    <property type="entry name" value="SHSP"/>
    <property type="match status" value="1"/>
</dbReference>
<reference key="1">
    <citation type="journal article" date="1977" name="Biochim. Biophys. Acta">
        <title>Primary structures of alpha-crystallin A chains of elephant, whale, hyrax and rhinoceros.</title>
        <authorList>
            <person name="de Jong W.W."/>
            <person name="Nuy-Terwindt E.C."/>
            <person name="Versteeg M."/>
        </authorList>
    </citation>
    <scope>PARTIAL PROTEIN SEQUENCE</scope>
    <scope>ACETYLATION AT MET-1</scope>
</reference>
<feature type="chain" id="PRO_0000125847" description="Alpha-crystallin A chain">
    <location>
        <begin position="1"/>
        <end position="173"/>
    </location>
</feature>
<feature type="domain" description="sHSP" evidence="4">
    <location>
        <begin position="52"/>
        <end position="162"/>
    </location>
</feature>
<feature type="region of interest" description="Required for complex formation with BFSP1 and BFSP2" evidence="3">
    <location>
        <begin position="1"/>
        <end position="63"/>
    </location>
</feature>
<feature type="region of interest" description="Disordered" evidence="5">
    <location>
        <begin position="144"/>
        <end position="173"/>
    </location>
</feature>
<feature type="compositionally biased region" description="Basic and acidic residues" evidence="5">
    <location>
        <begin position="153"/>
        <end position="167"/>
    </location>
</feature>
<feature type="binding site" evidence="2">
    <location>
        <position position="100"/>
    </location>
    <ligand>
        <name>Zn(2+)</name>
        <dbReference type="ChEBI" id="CHEBI:29105"/>
        <label>1</label>
    </ligand>
</feature>
<feature type="binding site" evidence="2">
    <location>
        <position position="102"/>
    </location>
    <ligand>
        <name>Zn(2+)</name>
        <dbReference type="ChEBI" id="CHEBI:29105"/>
        <label>1</label>
    </ligand>
</feature>
<feature type="binding site" evidence="2">
    <location>
        <position position="107"/>
    </location>
    <ligand>
        <name>Zn(2+)</name>
        <dbReference type="ChEBI" id="CHEBI:29105"/>
        <label>2</label>
    </ligand>
</feature>
<feature type="binding site" evidence="2">
    <location>
        <position position="154"/>
    </location>
    <ligand>
        <name>Zn(2+)</name>
        <dbReference type="ChEBI" id="CHEBI:29105"/>
        <label>3</label>
    </ligand>
</feature>
<feature type="modified residue" description="N-acetylmethionine" evidence="6">
    <location>
        <position position="1"/>
    </location>
</feature>
<feature type="modified residue" description="Deamidated glutamine; partial" evidence="1">
    <location>
        <position position="6"/>
    </location>
</feature>
<feature type="modified residue" description="Phosphoserine" evidence="3">
    <location>
        <position position="45"/>
    </location>
</feature>
<feature type="modified residue" description="Deamidated glutamine; partial" evidence="1">
    <location>
        <position position="50"/>
    </location>
</feature>
<feature type="modified residue" description="N6-acetyllysine" evidence="3">
    <location>
        <position position="70"/>
    </location>
</feature>
<feature type="modified residue" description="Deamidated glutamine; partial" evidence="1">
    <location>
        <position position="90"/>
    </location>
</feature>
<feature type="modified residue" description="N6-acetyllysine" evidence="3">
    <location>
        <position position="99"/>
    </location>
</feature>
<feature type="modified residue" description="Deamidated asparagine; partial" evidence="1">
    <location>
        <position position="101"/>
    </location>
</feature>
<feature type="modified residue" description="Phosphoserine" evidence="2">
    <location>
        <position position="122"/>
    </location>
</feature>
<feature type="modified residue" description="Deamidated asparagine; partial" evidence="1">
    <location>
        <position position="123"/>
    </location>
</feature>
<feature type="glycosylation site" description="O-linked (GlcNAc) serine" evidence="1">
    <location>
        <position position="162"/>
    </location>
</feature>
<gene>
    <name type="primary">CRYAA</name>
</gene>
<accession>P02474</accession>
<protein>
    <recommendedName>
        <fullName>Alpha-crystallin A chain</fullName>
    </recommendedName>
</protein>
<sequence>MDIAIQHPWFKRALGPFYPSRLFDQFFGEGLFEYDLLPFLSSTISPYYRQSLFRTVLDSGISEVRSDRDKFVIFLDVKHFSPEDLTVKVQEDFVEIHGKHNERQDDHGYISREFHRRYRLPSNVDQSALSCSLSADGMLTFSGPKVPSGMDAGHSERAIPVSREEKPSSAPSS</sequence>
<keyword id="KW-0007">Acetylation</keyword>
<keyword id="KW-0143">Chaperone</keyword>
<keyword id="KW-0963">Cytoplasm</keyword>
<keyword id="KW-0903">Direct protein sequencing</keyword>
<keyword id="KW-0273">Eye lens protein</keyword>
<keyword id="KW-0325">Glycoprotein</keyword>
<keyword id="KW-0479">Metal-binding</keyword>
<keyword id="KW-0488">Methylation</keyword>
<keyword id="KW-0539">Nucleus</keyword>
<keyword id="KW-0597">Phosphoprotein</keyword>
<keyword id="KW-0862">Zinc</keyword>
<organism>
    <name type="scientific">Balaenoptera acutorostrata</name>
    <name type="common">Common minke whale</name>
    <name type="synonym">Balaena rostrata</name>
    <dbReference type="NCBI Taxonomy" id="9767"/>
    <lineage>
        <taxon>Eukaryota</taxon>
        <taxon>Metazoa</taxon>
        <taxon>Chordata</taxon>
        <taxon>Craniata</taxon>
        <taxon>Vertebrata</taxon>
        <taxon>Euteleostomi</taxon>
        <taxon>Mammalia</taxon>
        <taxon>Eutheria</taxon>
        <taxon>Laurasiatheria</taxon>
        <taxon>Artiodactyla</taxon>
        <taxon>Whippomorpha</taxon>
        <taxon>Cetacea</taxon>
        <taxon>Mysticeti</taxon>
        <taxon>Balaenopteridae</taxon>
        <taxon>Balaenoptera</taxon>
    </lineage>
</organism>
<proteinExistence type="evidence at protein level"/>